<protein>
    <recommendedName>
        <fullName>Non-structural polyprotein p200</fullName>
        <shortName>p200</shortName>
    </recommendedName>
    <component>
        <recommendedName>
            <fullName>Protease/methyltransferase p150</fullName>
            <shortName>p150</shortName>
            <ecNumber>3.4.22.-</ecNumber>
        </recommendedName>
    </component>
    <component>
        <recommendedName>
            <fullName>RNA-directed RNA polymerase p90</fullName>
            <shortName>p90</shortName>
            <ecNumber evidence="4">2.7.7.48</ecNumber>
            <ecNumber>3.6.1.15</ecNumber>
            <ecNumber>3.6.4.13</ecNumber>
        </recommendedName>
    </component>
</protein>
<dbReference type="EC" id="3.4.22.-"/>
<dbReference type="EC" id="2.7.7.48" evidence="4"/>
<dbReference type="EC" id="3.6.1.15"/>
<dbReference type="EC" id="3.6.4.13"/>
<dbReference type="EMBL" id="AB047330">
    <property type="protein sequence ID" value="BAB32473.1"/>
    <property type="molecule type" value="Genomic_RNA"/>
</dbReference>
<dbReference type="SMR" id="Q99IE5"/>
<dbReference type="IntAct" id="Q99IE5">
    <property type="interactions" value="1"/>
</dbReference>
<dbReference type="MEROPS" id="C27.001"/>
<dbReference type="Proteomes" id="UP000008389">
    <property type="component" value="Genome"/>
</dbReference>
<dbReference type="GO" id="GO:0033644">
    <property type="term" value="C:host cell membrane"/>
    <property type="evidence" value="ECO:0007669"/>
    <property type="project" value="UniProtKB-SubCell"/>
</dbReference>
<dbReference type="GO" id="GO:0044220">
    <property type="term" value="C:host cell perinuclear region of cytoplasm"/>
    <property type="evidence" value="ECO:0007669"/>
    <property type="project" value="UniProtKB-SubCell"/>
</dbReference>
<dbReference type="GO" id="GO:0016020">
    <property type="term" value="C:membrane"/>
    <property type="evidence" value="ECO:0007669"/>
    <property type="project" value="UniProtKB-KW"/>
</dbReference>
<dbReference type="GO" id="GO:0005524">
    <property type="term" value="F:ATP binding"/>
    <property type="evidence" value="ECO:0007669"/>
    <property type="project" value="UniProtKB-KW"/>
</dbReference>
<dbReference type="GO" id="GO:0016887">
    <property type="term" value="F:ATP hydrolysis activity"/>
    <property type="evidence" value="ECO:0007669"/>
    <property type="project" value="RHEA"/>
</dbReference>
<dbReference type="GO" id="GO:0004197">
    <property type="term" value="F:cysteine-type endopeptidase activity"/>
    <property type="evidence" value="ECO:0007669"/>
    <property type="project" value="InterPro"/>
</dbReference>
<dbReference type="GO" id="GO:0046872">
    <property type="term" value="F:metal ion binding"/>
    <property type="evidence" value="ECO:0007669"/>
    <property type="project" value="UniProtKB-KW"/>
</dbReference>
<dbReference type="GO" id="GO:0008174">
    <property type="term" value="F:mRNA methyltransferase activity"/>
    <property type="evidence" value="ECO:0007669"/>
    <property type="project" value="InterPro"/>
</dbReference>
<dbReference type="GO" id="GO:0003723">
    <property type="term" value="F:RNA binding"/>
    <property type="evidence" value="ECO:0007669"/>
    <property type="project" value="InterPro"/>
</dbReference>
<dbReference type="GO" id="GO:0003724">
    <property type="term" value="F:RNA helicase activity"/>
    <property type="evidence" value="ECO:0007669"/>
    <property type="project" value="UniProtKB-EC"/>
</dbReference>
<dbReference type="GO" id="GO:0003968">
    <property type="term" value="F:RNA-directed RNA polymerase activity"/>
    <property type="evidence" value="ECO:0007669"/>
    <property type="project" value="UniProtKB-KW"/>
</dbReference>
<dbReference type="GO" id="GO:0006351">
    <property type="term" value="P:DNA-templated transcription"/>
    <property type="evidence" value="ECO:0007669"/>
    <property type="project" value="InterPro"/>
</dbReference>
<dbReference type="GO" id="GO:0016556">
    <property type="term" value="P:mRNA modification"/>
    <property type="evidence" value="ECO:0007669"/>
    <property type="project" value="InterPro"/>
</dbReference>
<dbReference type="GO" id="GO:0006508">
    <property type="term" value="P:proteolysis"/>
    <property type="evidence" value="ECO:0007669"/>
    <property type="project" value="UniProtKB-KW"/>
</dbReference>
<dbReference type="GO" id="GO:0006396">
    <property type="term" value="P:RNA processing"/>
    <property type="evidence" value="ECO:0007669"/>
    <property type="project" value="InterPro"/>
</dbReference>
<dbReference type="GO" id="GO:0039694">
    <property type="term" value="P:viral RNA genome replication"/>
    <property type="evidence" value="ECO:0007669"/>
    <property type="project" value="InterPro"/>
</dbReference>
<dbReference type="CDD" id="cd21557">
    <property type="entry name" value="Macro_X_Nsp3-like"/>
    <property type="match status" value="1"/>
</dbReference>
<dbReference type="CDD" id="cd23260">
    <property type="entry name" value="Matonaviridae_RdRp"/>
    <property type="match status" value="1"/>
</dbReference>
<dbReference type="Gene3D" id="3.40.220.10">
    <property type="entry name" value="Leucine Aminopeptidase, subunit E, domain 1"/>
    <property type="match status" value="1"/>
</dbReference>
<dbReference type="Gene3D" id="3.40.50.300">
    <property type="entry name" value="P-loop containing nucleotide triphosphate hydrolases"/>
    <property type="match status" value="1"/>
</dbReference>
<dbReference type="InterPro" id="IPR027351">
    <property type="entry name" value="(+)RNA_virus_helicase_core_dom"/>
</dbReference>
<dbReference type="InterPro" id="IPR002588">
    <property type="entry name" value="Alphavirus-like_MT_dom"/>
</dbReference>
<dbReference type="InterPro" id="IPR043502">
    <property type="entry name" value="DNA/RNA_pol_sf"/>
</dbReference>
<dbReference type="InterPro" id="IPR002589">
    <property type="entry name" value="Macro_dom"/>
</dbReference>
<dbReference type="InterPro" id="IPR043472">
    <property type="entry name" value="Macro_dom-like"/>
</dbReference>
<dbReference type="InterPro" id="IPR044371">
    <property type="entry name" value="Macro_X_NSP3-like"/>
</dbReference>
<dbReference type="InterPro" id="IPR047306">
    <property type="entry name" value="Matonaviridae_RdRp"/>
</dbReference>
<dbReference type="InterPro" id="IPR027417">
    <property type="entry name" value="P-loop_NTPase"/>
</dbReference>
<dbReference type="InterPro" id="IPR008738">
    <property type="entry name" value="Peptidase_C27"/>
</dbReference>
<dbReference type="InterPro" id="IPR001788">
    <property type="entry name" value="RNA-dep_RNA_pol_alsuvir"/>
</dbReference>
<dbReference type="InterPro" id="IPR007094">
    <property type="entry name" value="RNA-dir_pol_PSvirus"/>
</dbReference>
<dbReference type="InterPro" id="IPR022245">
    <property type="entry name" value="Rubi_NSP_C"/>
</dbReference>
<dbReference type="InterPro" id="IPR044070">
    <property type="entry name" value="RUBV_NS_PRO"/>
</dbReference>
<dbReference type="PANTHER" id="PTHR11106">
    <property type="entry name" value="GANGLIOSIDE INDUCED DIFFERENTIATION ASSOCIATED PROTEIN 2-RELATED"/>
    <property type="match status" value="1"/>
</dbReference>
<dbReference type="PANTHER" id="PTHR11106:SF27">
    <property type="entry name" value="MACRO DOMAIN-CONTAINING PROTEIN"/>
    <property type="match status" value="1"/>
</dbReference>
<dbReference type="Pfam" id="PF01661">
    <property type="entry name" value="Macro"/>
    <property type="match status" value="1"/>
</dbReference>
<dbReference type="Pfam" id="PF05407">
    <property type="entry name" value="Peptidase_C27"/>
    <property type="match status" value="1"/>
</dbReference>
<dbReference type="Pfam" id="PF00978">
    <property type="entry name" value="RdRP_2"/>
    <property type="match status" value="1"/>
</dbReference>
<dbReference type="Pfam" id="PF12601">
    <property type="entry name" value="Rubi_NSP_C"/>
    <property type="match status" value="1"/>
</dbReference>
<dbReference type="Pfam" id="PF01443">
    <property type="entry name" value="Viral_helicase1"/>
    <property type="match status" value="1"/>
</dbReference>
<dbReference type="SMART" id="SM00506">
    <property type="entry name" value="A1pp"/>
    <property type="match status" value="1"/>
</dbReference>
<dbReference type="SUPFAM" id="SSF56672">
    <property type="entry name" value="DNA/RNA polymerases"/>
    <property type="match status" value="1"/>
</dbReference>
<dbReference type="SUPFAM" id="SSF52949">
    <property type="entry name" value="Macro domain-like"/>
    <property type="match status" value="1"/>
</dbReference>
<dbReference type="SUPFAM" id="SSF52540">
    <property type="entry name" value="P-loop containing nucleoside triphosphate hydrolases"/>
    <property type="match status" value="1"/>
</dbReference>
<dbReference type="PROSITE" id="PS51743">
    <property type="entry name" value="ALPHAVIRUS_MT"/>
    <property type="match status" value="1"/>
</dbReference>
<dbReference type="PROSITE" id="PS51154">
    <property type="entry name" value="MACRO"/>
    <property type="match status" value="1"/>
</dbReference>
<dbReference type="PROSITE" id="PS51657">
    <property type="entry name" value="PSRV_HELICASE"/>
    <property type="match status" value="1"/>
</dbReference>
<dbReference type="PROSITE" id="PS50507">
    <property type="entry name" value="RDRP_SSRNA_POS"/>
    <property type="match status" value="1"/>
</dbReference>
<dbReference type="PROSITE" id="PS51889">
    <property type="entry name" value="RUBV_NS_PRO"/>
    <property type="match status" value="1"/>
</dbReference>
<comment type="function">
    <molecule>Non-structural polyprotein p200</molecule>
    <text evidence="2">Probable principal replicase for the negative-strand DNA, which replicates the 40S (+) genomic RNA into (-) antigenomic RNA. It cannot replicate the (-) into (+) until cleaved into p150 and p90 mature proteins.</text>
</comment>
<comment type="function">
    <molecule>Protease/methyltransferase p150</molecule>
    <text evidence="2">Protease that cleaves the precursor polyprotein into two mature products. Together with RNA-directed RNA polymerase p90, replicates the 40S genomic and antigenomic RNA by recognizing replications specific signals. The heterodimer P150/p90 is probably the principal replicase for positive-strand genomic RNA and the 24S subgenomic RNA, which codes for structural proteins. Responsible for the mRNA-capping of the viral mRNAs. This function is necessary since all viral RNAs are synthesized in the cytoplasm, and host capping enzymes are restricted to the nucleus. Forms fibers late in the infection that may be involved in cell-to-cell spread of the virus RNA in the absence of virus particle formation.</text>
</comment>
<comment type="function">
    <molecule>RNA-directed RNA polymerase p90</molecule>
    <text evidence="2">Together with protease/methyltransferase p150, replicates the 40S genomic and antigenomic RNA by recognizing replications specific signals. The heterodimer P150/p90 is probably the principal replicase for positive-strand genomic RNA and the 24S subgenomic RNA, which codes for structural proteins. A helicase activity is probably also present.</text>
</comment>
<comment type="catalytic activity">
    <reaction evidence="2 4">
        <text>RNA(n) + a ribonucleoside 5'-triphosphate = RNA(n+1) + diphosphate</text>
        <dbReference type="Rhea" id="RHEA:21248"/>
        <dbReference type="Rhea" id="RHEA-COMP:14527"/>
        <dbReference type="Rhea" id="RHEA-COMP:17342"/>
        <dbReference type="ChEBI" id="CHEBI:33019"/>
        <dbReference type="ChEBI" id="CHEBI:61557"/>
        <dbReference type="ChEBI" id="CHEBI:140395"/>
        <dbReference type="EC" id="2.7.7.48"/>
    </reaction>
</comment>
<comment type="catalytic activity">
    <reaction evidence="2">
        <text>a ribonucleoside 5'-triphosphate + H2O = a ribonucleoside 5'-diphosphate + phosphate + H(+)</text>
        <dbReference type="Rhea" id="RHEA:23680"/>
        <dbReference type="ChEBI" id="CHEBI:15377"/>
        <dbReference type="ChEBI" id="CHEBI:15378"/>
        <dbReference type="ChEBI" id="CHEBI:43474"/>
        <dbReference type="ChEBI" id="CHEBI:57930"/>
        <dbReference type="ChEBI" id="CHEBI:61557"/>
        <dbReference type="EC" id="3.6.1.15"/>
    </reaction>
</comment>
<comment type="catalytic activity">
    <reaction evidence="2">
        <text>ATP + H2O = ADP + phosphate + H(+)</text>
        <dbReference type="Rhea" id="RHEA:13065"/>
        <dbReference type="ChEBI" id="CHEBI:15377"/>
        <dbReference type="ChEBI" id="CHEBI:15378"/>
        <dbReference type="ChEBI" id="CHEBI:30616"/>
        <dbReference type="ChEBI" id="CHEBI:43474"/>
        <dbReference type="ChEBI" id="CHEBI:456216"/>
        <dbReference type="EC" id="3.6.4.13"/>
    </reaction>
</comment>
<comment type="cofactor">
    <cofactor evidence="7">
        <name>Zn(2+)</name>
        <dbReference type="ChEBI" id="CHEBI:29105"/>
    </cofactor>
    <text evidence="7">Zn(2+) is necessary for the protease activity. The protease can also function efficiently with Cd(2+) and Co(2+).</text>
</comment>
<comment type="subunit">
    <molecule>Protease/methyltransferase p150</molecule>
    <text evidence="2">Interacts with RNA-directed RNA polymerase p90. Interacts with host CALM1; this interaction is necessary for the protease activity and viral infectivity. Interacts with host C1QBP. Interacts with the capsid protein.</text>
</comment>
<comment type="subunit">
    <molecule>RNA-directed RNA polymerase p90</molecule>
    <text evidence="2">Interacts with human RB1/retinoblastoma protein. Interacts with protease/methyltransferase p150.</text>
</comment>
<comment type="subcellular location">
    <molecule>Non-structural polyprotein p200</molecule>
    <subcellularLocation>
        <location evidence="2">Host membrane</location>
    </subcellularLocation>
    <subcellularLocation>
        <location evidence="2">Host cytoplasm</location>
        <location evidence="2">Host perinuclear region</location>
    </subcellularLocation>
    <subcellularLocation>
        <location evidence="2">Host cytoplasm</location>
    </subcellularLocation>
    <text evidence="2">Localizes to cytoplasmic foci at 24 hpi.</text>
</comment>
<comment type="subcellular location">
    <molecule>Protease/methyltransferase p150</molecule>
    <subcellularLocation>
        <location evidence="2">Host membrane</location>
    </subcellularLocation>
    <subcellularLocation>
        <location evidence="2">Host cytoplasm</location>
        <location evidence="2">Host perinuclear region</location>
    </subcellularLocation>
    <subcellularLocation>
        <location evidence="2">Host cytoplasm</location>
    </subcellularLocation>
    <text evidence="1 2">At 36 hpi, localizes to the host cytoplasm, probably in vesicles inside host vacuoles of endosomal and lysosomal origin (By similarity). At 72 hpi, localizes to filamentous structures in the host cytoplasm (By similarity).</text>
</comment>
<comment type="subcellular location">
    <molecule>RNA-directed RNA polymerase p90</molecule>
    <subcellularLocation>
        <location evidence="2">Host membrane</location>
    </subcellularLocation>
    <subcellularLocation>
        <location evidence="2">Host cytoplasm</location>
    </subcellularLocation>
    <text evidence="2">Localizes to the cytoplasm and to the cytoplasmic fibers formed by protease/methyltransferase p150.</text>
</comment>
<comment type="domain">
    <molecule>Protease/methyltransferase p150</molecule>
    <text evidence="2">The N-terminus has a methyltransferase activity for mRNA-capping. The C-terminus harbors a protease active in cis or in trans which specifically cleaves and releases the two mature proteins. Both the N-terminus and C-terminus are required for fiber formation. The N-terminus is involved in associating with membranes. An EF-hand Ca(2+)-binding motif is present in the protease. Also contains 3 SH3-binding motifs that are responsible for the interaction with host C1QBP.</text>
</comment>
<comment type="PTM">
    <molecule>Non-structural polyprotein p200</molecule>
    <text evidence="2">Specific enzymatic cleavage by its own cysteine protease yield mature proteins p150 and p90.</text>
</comment>
<comment type="miscellaneous">
    <text evidence="2">Rubella virus in utero infection has frequently severe consequences on normal fetal development, collectively known as congenital rubella syndrome (CRS). The teratogenicity of the virus is possibly due to the interaction between the p90 protein and the human RB1/retinoblastoma protein.</text>
</comment>
<keyword id="KW-0067">ATP-binding</keyword>
<keyword id="KW-0106">Calcium</keyword>
<keyword id="KW-0347">Helicase</keyword>
<keyword id="KW-1035">Host cytoplasm</keyword>
<keyword id="KW-1043">Host membrane</keyword>
<keyword id="KW-0378">Hydrolase</keyword>
<keyword id="KW-0472">Membrane</keyword>
<keyword id="KW-0479">Metal-binding</keyword>
<keyword id="KW-0547">Nucleotide-binding</keyword>
<keyword id="KW-0548">Nucleotidyltransferase</keyword>
<keyword id="KW-0645">Protease</keyword>
<keyword id="KW-0696">RNA-directed RNA polymerase</keyword>
<keyword id="KW-0788">Thiol protease</keyword>
<keyword id="KW-0808">Transferase</keyword>
<keyword id="KW-0693">Viral RNA replication</keyword>
<keyword id="KW-0862">Zinc</keyword>
<name>POLN_RUBVV</name>
<accession>Q99IE5</accession>
<organism>
    <name type="scientific">Rubella virus (strain TO-336)</name>
    <name type="common">RUBV</name>
    <dbReference type="NCBI Taxonomy" id="376264"/>
    <lineage>
        <taxon>Viruses</taxon>
        <taxon>Riboviria</taxon>
        <taxon>Orthornavirae</taxon>
        <taxon>Kitrinoviricota</taxon>
        <taxon>Alsuviricetes</taxon>
        <taxon>Hepelivirales</taxon>
        <taxon>Matonaviridae</taxon>
        <taxon>Rubivirus</taxon>
        <taxon>Rubivirus rubellae</taxon>
    </lineage>
</organism>
<proteinExistence type="inferred from homology"/>
<reference key="1">
    <citation type="journal article" date="2001" name="Vaccine">
        <title>Mutation of rubella virus vaccine TO-336 strain occurred in the attenuation process of wild progenitor virus.</title>
        <authorList>
            <person name="Kakizawa J."/>
            <person name="Nitta Y."/>
            <person name="Yamashita T."/>
            <person name="Ushijima H."/>
            <person name="Katow S."/>
        </authorList>
    </citation>
    <scope>NUCLEOTIDE SEQUENCE [GENOMIC RNA]</scope>
</reference>
<sequence>MEKLLDEVLAPGGPYNLTVGSWVRDHVRSIVEGAWEVRDVVTAAQKRAIVAVIPRPVFTQMQVSDHPALHAISRYTRRHWIEWGPKEALHVLIDPSPGLLREVARVERRWVALCLHRTARKLATALAETASEAWHADYVCALRGAPSGPFYVHPEDVPHGGRAVADRCLLYYTPMQMCELMRTIDATLLVAVDLWPVALAAHVGDDWDDLGIAWHLDHDGGCPADCRGAGAGPTPGYTRPCTTRIYQVLPDTAHPGRLYRCGPRLWTRDCAVAELSWEVAQHCGHQARVRAVRCTLPIRHVRSLQPSARVRLPDLVHLAAVGRWRWFSLPRPVFQRMLSYCKTLSPDAYYSERVFKFKNALSHSITLAGNVLQEGWKGTCAEEDALCAYVAFRAWQSNARLAGIMKSAKRCAADSLSVAGWLDTIWDAIKRFFGSVPLAERMEEWEQDAAVAAFDRGPLEDGGRHLDTVQPPKSPPRPEIAATWIVHAASADRHCACAPRCDAPRERPSAPAGPPDDEALIPPWLFAERRALRCREWDFEALRARADTAAAPAPLAPRPARCPTVLYRHPAHHGPWLTLDEPGEADAALVLCDPLGQPLRGPERHFAAGAHMCAQARGLQAFVRVVPPPERPWADGGARAWAKFFRGCAWAQRLLGEPAVMHLPYTDGDVPQLIALALRTLAQQGAALALSVRDLPGGAAFDAHAVTAAVRAGPGQSAATSPPPGDPPPPRRARRSQRHLDARGTPPPAPARDPPPPAPSPPAPPRAGDPVLPTSAGPADRARHAELEVAYEPSDPPTPTKADPDSDIVESYARAAGPVHLRVRDIMDPPPGCKVVVNAANEGLLAGSGVCGAIFANATAALAADCRRLAPCPTGEAVATPGHGCGYTHIIHAVAPRRPRDPAALEEGEALLERAYRSIVALAAARRWACVACPLLGAGVYGWSAAESLRAALAATRAEPAERVSLHICHPDRATLTHASVLVGAGLAARRVSPPPTEPLASCPAGDPGRPAQRSASPPATPLGDATAPEPRGCQGCELCRYTRVTNDRAYVNLWLERDRGATSWAMRIPEVVVYGPEHLATHFPLNHYSVLKPAEVRPPRGMCGSDMWRCRGWQGMPQVRCTPSNAHAALCRTGVPPRVSTRGGELDPNTCWFRAAANVAQAARACGAYTSAGCPKCAYGRALSEARTHEDFAALSQRWSASHADASPDGTGDPLDPLMETVGCACSRVWVGSEHEAPPDHLLVSLHRAPNGPWGVVLEVRARPEGGNPTGHFVCAVGGGPRRVSDRPHLWLAVPLSRGGGTCAATDEGLAQAYYDDLEVRRLGDDAMARAALASVQRPRKGPYNIRVWNMAAGAGKTTRILAAFTREDLYVCPTNALLHEIQAKLRARDIDIKNAATYERALTKPLAAYRRIYIDEAFTLGGEYCAFVASQTTAEVICVGDRDQCGPHYANNCRTPVPDRWPTERSRHTWRFPDCWAARLRAGLDYDIEGERTGTFACNLWDGRQVDLHLAFSRETVRRLHEAGIRAYTVREAQGMSVGTACIHVGRDGTDVALALVRDLAIVSLTRASDALYLHELEDGSLRAAGLSAFLDAGALAELKEVPAGIDRVVAVEQAPPPLPPADGIPEAQDVPPFCPRTLEELVFGRAGHPHYADLNRVTEGEREVRYMRISRHLLNKNHTEMPGTERVLSAVCAVRRYRAGEDGSTLRTAVARQHPRPFRQIPPPRVTAGVAQEWRMTYLRERIDLTDVYTQMGVAARELTDRYARRYPEIFAGMCTAQSLSVPAFLKATLKCVDAALGPRDTEDCHAAQGKAGLEIRAWAKEWVQVMSPHFRAIQKIIMRALRPQFLVAAGHTEPEVDAWWQAHYTTNAIEVDFTEFDMNQTLATRDVELEISAALLGLPCAEDYRALRAGSYCTLRELGSTETGCERTSGEPATLLHNTTVAMCMAMRMVPKGVRWAGIFQGDDMVIFLPEGARSAALKWTPAEVGLFGFHIPVKHVSTPTPSFCGHVGTAAGLFHDVMHQAIKVLCRRFDPDVLEEQQVALLDRLRGVYAALPDTVAANAAYYDYSAERVLAIVRELTAYARGRGLDHPATIGALEEIQTPYARANLHDAD</sequence>
<organismHost>
    <name type="scientific">Homo sapiens</name>
    <name type="common">Human</name>
    <dbReference type="NCBI Taxonomy" id="9606"/>
</organismHost>
<feature type="chain" id="PRO_0000240179" description="Non-structural polyprotein p200">
    <location>
        <begin position="1"/>
        <end position="2116"/>
    </location>
</feature>
<feature type="chain" id="PRO_0000240180" description="Protease/methyltransferase p150">
    <location>
        <begin position="1"/>
        <end position="1301"/>
    </location>
</feature>
<feature type="chain" id="PRO_0000240181" description="RNA-directed RNA polymerase p90">
    <location>
        <begin position="1302"/>
        <end position="2116"/>
    </location>
</feature>
<feature type="domain" description="Alphavirus-like MT" evidence="6">
    <location>
        <begin position="57"/>
        <end position="247"/>
    </location>
</feature>
<feature type="domain" description="Macro" evidence="3">
    <location>
        <begin position="806"/>
        <end position="985"/>
    </location>
</feature>
<feature type="domain" description="Peptidase C27" evidence="7">
    <location>
        <begin position="1000"/>
        <end position="1301"/>
    </location>
</feature>
<feature type="domain" description="(+)RNA virus helicase ATP-binding" evidence="5">
    <location>
        <begin position="1320"/>
        <end position="1468"/>
    </location>
</feature>
<feature type="domain" description="(+)RNA virus helicase C-terminal" evidence="5">
    <location>
        <begin position="1469"/>
        <end position="1609"/>
    </location>
</feature>
<feature type="domain" description="RdRp catalytic" evidence="4">
    <location>
        <begin position="1870"/>
        <end position="1981"/>
    </location>
</feature>
<feature type="region of interest" description="Required for efficient proteolysis and P150-P90 interaction" evidence="2">
    <location>
        <begin position="36"/>
        <end position="49"/>
    </location>
</feature>
<feature type="region of interest" description="Disordered" evidence="8">
    <location>
        <begin position="711"/>
        <end position="780"/>
    </location>
</feature>
<feature type="region of interest" description="Disordered" evidence="8">
    <location>
        <begin position="992"/>
        <end position="1031"/>
    </location>
</feature>
<feature type="region of interest" description="Interaction with host CALM1" evidence="7">
    <location>
        <begin position="1152"/>
        <end position="1183"/>
    </location>
</feature>
<feature type="region of interest" description="EF-hand-like" evidence="7">
    <location>
        <begin position="1193"/>
        <end position="1228"/>
    </location>
</feature>
<feature type="region of interest" description="Involved in P150-P90 interaction" evidence="2">
    <location>
        <begin position="1700"/>
        <end position="1900"/>
    </location>
</feature>
<feature type="short sequence motif" description="PxxPxR; class II SH3-binding" evidence="2">
    <location>
        <begin position="727"/>
        <end position="732"/>
    </location>
</feature>
<feature type="short sequence motif" description="PxxPxR; class II SH3-binding" evidence="2">
    <location>
        <begin position="747"/>
        <end position="752"/>
    </location>
</feature>
<feature type="short sequence motif" description="PxxPxR; class II SH3-binding" evidence="2">
    <location>
        <begin position="761"/>
        <end position="766"/>
    </location>
</feature>
<feature type="short sequence motif" description="Human RB1 binding" evidence="2">
    <location>
        <begin position="1902"/>
        <end position="1906"/>
    </location>
</feature>
<feature type="compositionally biased region" description="Low complexity" evidence="8">
    <location>
        <begin position="711"/>
        <end position="720"/>
    </location>
</feature>
<feature type="compositionally biased region" description="Pro residues" evidence="8">
    <location>
        <begin position="721"/>
        <end position="730"/>
    </location>
</feature>
<feature type="compositionally biased region" description="Pro residues" evidence="8">
    <location>
        <begin position="745"/>
        <end position="767"/>
    </location>
</feature>
<feature type="active site" description="For cysteine protease activity" evidence="7">
    <location>
        <position position="1152"/>
    </location>
</feature>
<feature type="active site" description="For cysteine protease activity" evidence="7">
    <location>
        <position position="1273"/>
    </location>
</feature>
<feature type="binding site" evidence="7">
    <location>
        <position position="1175"/>
    </location>
    <ligand>
        <name>Zn(2+)</name>
        <dbReference type="ChEBI" id="CHEBI:29105"/>
    </ligand>
</feature>
<feature type="binding site" evidence="7">
    <location>
        <position position="1178"/>
    </location>
    <ligand>
        <name>Zn(2+)</name>
        <dbReference type="ChEBI" id="CHEBI:29105"/>
    </ligand>
</feature>
<feature type="binding site" evidence="7">
    <location>
        <position position="1227"/>
    </location>
    <ligand>
        <name>Zn(2+)</name>
        <dbReference type="ChEBI" id="CHEBI:29105"/>
    </ligand>
</feature>
<feature type="binding site" evidence="7">
    <location>
        <position position="1273"/>
    </location>
    <ligand>
        <name>Zn(2+)</name>
        <dbReference type="ChEBI" id="CHEBI:29105"/>
    </ligand>
</feature>
<feature type="binding site" evidence="5">
    <location>
        <begin position="1352"/>
        <end position="1359"/>
    </location>
    <ligand>
        <name>a ribonucleoside 5'-triphosphate</name>
        <dbReference type="ChEBI" id="CHEBI:61557"/>
    </ligand>
</feature>
<feature type="site" description="Cleavage; autocatalytic" evidence="7">
    <location>
        <begin position="1301"/>
        <end position="1302"/>
    </location>
</feature>
<evidence type="ECO:0000250" key="1">
    <source>
        <dbReference type="UniProtKB" id="P13889"/>
    </source>
</evidence>
<evidence type="ECO:0000250" key="2">
    <source>
        <dbReference type="UniProtKB" id="Q86500"/>
    </source>
</evidence>
<evidence type="ECO:0000255" key="3">
    <source>
        <dbReference type="PROSITE-ProRule" id="PRU00490"/>
    </source>
</evidence>
<evidence type="ECO:0000255" key="4">
    <source>
        <dbReference type="PROSITE-ProRule" id="PRU00539"/>
    </source>
</evidence>
<evidence type="ECO:0000255" key="5">
    <source>
        <dbReference type="PROSITE-ProRule" id="PRU00990"/>
    </source>
</evidence>
<evidence type="ECO:0000255" key="6">
    <source>
        <dbReference type="PROSITE-ProRule" id="PRU01079"/>
    </source>
</evidence>
<evidence type="ECO:0000255" key="7">
    <source>
        <dbReference type="PROSITE-ProRule" id="PRU01237"/>
    </source>
</evidence>
<evidence type="ECO:0000256" key="8">
    <source>
        <dbReference type="SAM" id="MobiDB-lite"/>
    </source>
</evidence>